<dbReference type="EMBL" id="CP001091">
    <property type="protein sequence ID" value="ACE62724.1"/>
    <property type="molecule type" value="Genomic_DNA"/>
</dbReference>
<dbReference type="RefSeq" id="WP_005599788.1">
    <property type="nucleotide sequence ID" value="NC_010939.1"/>
</dbReference>
<dbReference type="SMR" id="B3GZD1"/>
<dbReference type="GeneID" id="48600287"/>
<dbReference type="KEGG" id="apa:APP7_2072"/>
<dbReference type="HOGENOM" id="CLU_086034_5_1_6"/>
<dbReference type="Proteomes" id="UP000001226">
    <property type="component" value="Chromosome"/>
</dbReference>
<dbReference type="GO" id="GO:0033281">
    <property type="term" value="C:TAT protein transport complex"/>
    <property type="evidence" value="ECO:0007669"/>
    <property type="project" value="UniProtKB-UniRule"/>
</dbReference>
<dbReference type="GO" id="GO:0008320">
    <property type="term" value="F:protein transmembrane transporter activity"/>
    <property type="evidence" value="ECO:0007669"/>
    <property type="project" value="UniProtKB-UniRule"/>
</dbReference>
<dbReference type="GO" id="GO:0043953">
    <property type="term" value="P:protein transport by the Tat complex"/>
    <property type="evidence" value="ECO:0007669"/>
    <property type="project" value="UniProtKB-UniRule"/>
</dbReference>
<dbReference type="Gene3D" id="1.20.5.3310">
    <property type="match status" value="1"/>
</dbReference>
<dbReference type="HAMAP" id="MF_00236">
    <property type="entry name" value="TatA_E"/>
    <property type="match status" value="1"/>
</dbReference>
<dbReference type="InterPro" id="IPR003369">
    <property type="entry name" value="TatA/B/E"/>
</dbReference>
<dbReference type="InterPro" id="IPR006312">
    <property type="entry name" value="TatA/E"/>
</dbReference>
<dbReference type="NCBIfam" id="NF002500">
    <property type="entry name" value="PRK01833.1"/>
    <property type="match status" value="1"/>
</dbReference>
<dbReference type="NCBIfam" id="TIGR01411">
    <property type="entry name" value="tatAE"/>
    <property type="match status" value="1"/>
</dbReference>
<dbReference type="PANTHER" id="PTHR42982">
    <property type="entry name" value="SEC-INDEPENDENT PROTEIN TRANSLOCASE PROTEIN TATA"/>
    <property type="match status" value="1"/>
</dbReference>
<dbReference type="PANTHER" id="PTHR42982:SF1">
    <property type="entry name" value="SEC-INDEPENDENT PROTEIN TRANSLOCASE PROTEIN TATA"/>
    <property type="match status" value="1"/>
</dbReference>
<dbReference type="Pfam" id="PF02416">
    <property type="entry name" value="TatA_B_E"/>
    <property type="match status" value="1"/>
</dbReference>
<accession>B3GZD1</accession>
<evidence type="ECO:0000255" key="1">
    <source>
        <dbReference type="HAMAP-Rule" id="MF_00236"/>
    </source>
</evidence>
<evidence type="ECO:0000256" key="2">
    <source>
        <dbReference type="SAM" id="MobiDB-lite"/>
    </source>
</evidence>
<feature type="chain" id="PRO_1000125178" description="Sec-independent protein translocase protein TatA">
    <location>
        <begin position="1"/>
        <end position="76"/>
    </location>
</feature>
<feature type="transmembrane region" description="Helical" evidence="1">
    <location>
        <begin position="1"/>
        <end position="21"/>
    </location>
</feature>
<feature type="region of interest" description="Disordered" evidence="2">
    <location>
        <begin position="43"/>
        <end position="76"/>
    </location>
</feature>
<protein>
    <recommendedName>
        <fullName evidence="1">Sec-independent protein translocase protein TatA</fullName>
    </recommendedName>
</protein>
<proteinExistence type="inferred from homology"/>
<reference key="1">
    <citation type="submission" date="2008-06" db="EMBL/GenBank/DDBJ databases">
        <title>Genome and proteome analysis of A. pleuropneumoniae serotype 7.</title>
        <authorList>
            <person name="Linke B."/>
            <person name="Buettner F."/>
            <person name="Martinez-Arias R."/>
            <person name="Goesmann A."/>
            <person name="Baltes N."/>
            <person name="Tegetmeyer H."/>
            <person name="Singh M."/>
            <person name="Gerlach G.F."/>
        </authorList>
    </citation>
    <scope>NUCLEOTIDE SEQUENCE [LARGE SCALE GENOMIC DNA]</scope>
    <source>
        <strain>AP76</strain>
    </source>
</reference>
<comment type="function">
    <text evidence="1">Part of the twin-arginine translocation (Tat) system that transports large folded proteins containing a characteristic twin-arginine motif in their signal peptide across membranes. TatA could form the protein-conducting channel of the Tat system.</text>
</comment>
<comment type="subunit">
    <text evidence="1">The Tat system comprises two distinct complexes: a TatABC complex, containing multiple copies of TatA, TatB and TatC subunits, and a separate TatA complex, containing only TatA subunits. Substrates initially bind to the TatABC complex, which probably triggers association of the separate TatA complex to form the active translocon.</text>
</comment>
<comment type="subcellular location">
    <subcellularLocation>
        <location evidence="1">Cell inner membrane</location>
        <topology evidence="1">Single-pass membrane protein</topology>
    </subcellularLocation>
</comment>
<comment type="similarity">
    <text evidence="1">Belongs to the TatA/E family.</text>
</comment>
<gene>
    <name evidence="1" type="primary">tatA</name>
    <name type="ordered locus">APP7_2072</name>
</gene>
<organism>
    <name type="scientific">Actinobacillus pleuropneumoniae serotype 7 (strain AP76)</name>
    <dbReference type="NCBI Taxonomy" id="537457"/>
    <lineage>
        <taxon>Bacteria</taxon>
        <taxon>Pseudomonadati</taxon>
        <taxon>Pseudomonadota</taxon>
        <taxon>Gammaproteobacteria</taxon>
        <taxon>Pasteurellales</taxon>
        <taxon>Pasteurellaceae</taxon>
        <taxon>Actinobacillus</taxon>
    </lineage>
</organism>
<sequence length="76" mass="8266">MGGISIWQLLIIVAIIVLLFGTKKLRTLGTDLGESVKGFKKAMADDKSQPQDASFEKVEAKEAASTEQKAKEKEQA</sequence>
<name>TATA_ACTP7</name>
<keyword id="KW-0997">Cell inner membrane</keyword>
<keyword id="KW-1003">Cell membrane</keyword>
<keyword id="KW-0472">Membrane</keyword>
<keyword id="KW-0653">Protein transport</keyword>
<keyword id="KW-0811">Translocation</keyword>
<keyword id="KW-0812">Transmembrane</keyword>
<keyword id="KW-1133">Transmembrane helix</keyword>
<keyword id="KW-0813">Transport</keyword>